<name>NDUBA_PONPY</name>
<accession>P0CC02</accession>
<accession>Q0MQF1</accession>
<accession>Q5REN0</accession>
<organism>
    <name type="scientific">Pongo pygmaeus</name>
    <name type="common">Bornean orangutan</name>
    <dbReference type="NCBI Taxonomy" id="9600"/>
    <lineage>
        <taxon>Eukaryota</taxon>
        <taxon>Metazoa</taxon>
        <taxon>Chordata</taxon>
        <taxon>Craniata</taxon>
        <taxon>Vertebrata</taxon>
        <taxon>Euteleostomi</taxon>
        <taxon>Mammalia</taxon>
        <taxon>Eutheria</taxon>
        <taxon>Euarchontoglires</taxon>
        <taxon>Primates</taxon>
        <taxon>Haplorrhini</taxon>
        <taxon>Catarrhini</taxon>
        <taxon>Hominidae</taxon>
        <taxon>Pongo</taxon>
    </lineage>
</organism>
<comment type="function">
    <text evidence="1">Accessory subunit that is involved in the functional assembly of the mitochondrial respiratory chain complex I. Complex I has an NADH dehydrogenase activity with ubiquinone as an immediate electron acceptor and mediates the transfer of electrons from NADH to the respiratory chain.</text>
</comment>
<comment type="subunit">
    <text evidence="1">Complex I is composed of 45 different subunits. Interacts with CHCHD4.</text>
</comment>
<comment type="subcellular location">
    <subcellularLocation>
        <location evidence="1">Mitochondrion inner membrane</location>
        <topology evidence="1">Peripheral membrane protein</topology>
        <orientation evidence="1">Matrix side</orientation>
    </subcellularLocation>
</comment>
<comment type="similarity">
    <text evidence="2">Belongs to the complex I NDUFB10 subunit family.</text>
</comment>
<evidence type="ECO:0000250" key="1">
    <source>
        <dbReference type="UniProtKB" id="O96000"/>
    </source>
</evidence>
<evidence type="ECO:0000305" key="2"/>
<protein>
    <recommendedName>
        <fullName>NADH dehydrogenase [ubiquinone] 1 beta subcomplex subunit 10</fullName>
    </recommendedName>
    <alternativeName>
        <fullName>Complex I-PDSW</fullName>
        <shortName>CI-PDSW</shortName>
    </alternativeName>
    <alternativeName>
        <fullName>NADH-ubiquinone oxidoreductase PDSW subunit</fullName>
    </alternativeName>
</protein>
<reference key="1">
    <citation type="journal article" date="2006" name="Gene">
        <title>Adaptive selection of mitochondrial complex I subunits during primate radiation.</title>
        <authorList>
            <person name="Mishmar D."/>
            <person name="Ruiz-Pesini E."/>
            <person name="Mondragon-Palomino M."/>
            <person name="Procaccio V."/>
            <person name="Gaut B."/>
            <person name="Wallace D.C."/>
        </authorList>
    </citation>
    <scope>NUCLEOTIDE SEQUENCE [MRNA]</scope>
</reference>
<dbReference type="EMBL" id="DQ885683">
    <property type="protein sequence ID" value="ABH12192.1"/>
    <property type="molecule type" value="mRNA"/>
</dbReference>
<dbReference type="SMR" id="P0CC02"/>
<dbReference type="GO" id="GO:0005743">
    <property type="term" value="C:mitochondrial inner membrane"/>
    <property type="evidence" value="ECO:0000250"/>
    <property type="project" value="UniProtKB"/>
</dbReference>
<dbReference type="GO" id="GO:0045271">
    <property type="term" value="C:respiratory chain complex I"/>
    <property type="evidence" value="ECO:0000250"/>
    <property type="project" value="UniProtKB"/>
</dbReference>
<dbReference type="InterPro" id="IPR019377">
    <property type="entry name" value="NADH_UbQ_OxRdtase_su10"/>
</dbReference>
<dbReference type="InterPro" id="IPR039993">
    <property type="entry name" value="NDUFB10"/>
</dbReference>
<dbReference type="PANTHER" id="PTHR13094:SF1">
    <property type="entry name" value="NADH DEHYDROGENASE [UBIQUINONE] 1 BETA SUBCOMPLEX SUBUNIT 10"/>
    <property type="match status" value="1"/>
</dbReference>
<dbReference type="PANTHER" id="PTHR13094">
    <property type="entry name" value="NADH-UBIQUINONE OXIDOREDUCTASE PDSW SUBUNIT"/>
    <property type="match status" value="1"/>
</dbReference>
<dbReference type="Pfam" id="PF10249">
    <property type="entry name" value="NDUFB10"/>
    <property type="match status" value="1"/>
</dbReference>
<feature type="chain" id="PRO_0000389443" description="NADH dehydrogenase [ubiquinone] 1 beta subcomplex subunit 10">
    <location>
        <begin position="1"/>
        <end position="172"/>
    </location>
</feature>
<feature type="modified residue" description="Phosphoserine" evidence="1">
    <location>
        <position position="145"/>
    </location>
</feature>
<keyword id="KW-0249">Electron transport</keyword>
<keyword id="KW-0472">Membrane</keyword>
<keyword id="KW-0496">Mitochondrion</keyword>
<keyword id="KW-0999">Mitochondrion inner membrane</keyword>
<keyword id="KW-0597">Phosphoprotein</keyword>
<keyword id="KW-0679">Respiratory chain</keyword>
<keyword id="KW-0813">Transport</keyword>
<gene>
    <name type="primary">NDUFB10</name>
</gene>
<sequence length="172" mass="20834">MPDSWDKDVYPEPPRRTPVLPNPIVYMMKAFDLIVDRPVTLVREFIERQHAKNRYYYYHRQYRRVPDITECKEEDIMCVYEAEMQWRRDYKVDQEIINIMQDRLKACQQREGQNYQQNCIKEVEQFTQVAKAYQDRYQDLGAYYSARKCLAKQRQRMLQERKAAKEAAAATS</sequence>
<proteinExistence type="evidence at transcript level"/>